<proteinExistence type="inferred from homology"/>
<reference key="1">
    <citation type="submission" date="2006-08" db="EMBL/GenBank/DDBJ databases">
        <title>Complete sequence of chromosome 1 of Burkholderia cepacia AMMD.</title>
        <authorList>
            <person name="Copeland A."/>
            <person name="Lucas S."/>
            <person name="Lapidus A."/>
            <person name="Barry K."/>
            <person name="Detter J.C."/>
            <person name="Glavina del Rio T."/>
            <person name="Hammon N."/>
            <person name="Israni S."/>
            <person name="Pitluck S."/>
            <person name="Bruce D."/>
            <person name="Chain P."/>
            <person name="Malfatti S."/>
            <person name="Shin M."/>
            <person name="Vergez L."/>
            <person name="Schmutz J."/>
            <person name="Larimer F."/>
            <person name="Land M."/>
            <person name="Hauser L."/>
            <person name="Kyrpides N."/>
            <person name="Kim E."/>
            <person name="Parke J."/>
            <person name="Coenye T."/>
            <person name="Konstantinidis K."/>
            <person name="Ramette A."/>
            <person name="Tiedje J."/>
            <person name="Richardson P."/>
        </authorList>
    </citation>
    <scope>NUCLEOTIDE SEQUENCE [LARGE SCALE GENOMIC DNA]</scope>
    <source>
        <strain>ATCC BAA-244 / DSM 16087 / CCUG 44356 / LMG 19182 / AMMD</strain>
    </source>
</reference>
<keyword id="KW-0067">ATP-binding</keyword>
<keyword id="KW-0131">Cell cycle</keyword>
<keyword id="KW-0132">Cell division</keyword>
<keyword id="KW-0133">Cell shape</keyword>
<keyword id="KW-0961">Cell wall biogenesis/degradation</keyword>
<keyword id="KW-0963">Cytoplasm</keyword>
<keyword id="KW-0436">Ligase</keyword>
<keyword id="KW-0547">Nucleotide-binding</keyword>
<keyword id="KW-0573">Peptidoglycan synthesis</keyword>
<sequence length="465" mass="48979">MKHIVKQIHFVGIGGAGMSGIAEVLVNLGYEVSGSDLSRNAVTDRLEALGARIAIGHDAANIAGANAVVVSTAVRSDNPEVLAARHQGVPIVQRAVMLAELMRLKQGIAIAGTHGKTTTTSLVASVLAAGGLDPTFVIGGRLISAGANARLGTGDFIVAEADESDASFLNLYPVIEVITNIDADHMDTYGHDFARLKQAFIEFTQRLPFYGSAVVCVDDPNVRQIIPFISKPVVRYGLSPDAQVRAEDIDARDGRMHFTVIREGRAPLAVVLNLPGLHNVQNALAAIAIATDLGVSDDAIQQALAEFNGVGRRFQRYGEVPSADGGQYTLIDDYGHHPVEMAATVAAARGAFPGRRLVLAFQPHRYTRTRDCFDDFVNVLSTVDALVLTEVYAAGEAAITTANGDALSRALRAVGRVDPVFVASVDDVPDALAGVARNGDVVITMGAGSIGGVPAKIVQHIQQKA</sequence>
<protein>
    <recommendedName>
        <fullName evidence="1">UDP-N-acetylmuramate--L-alanine ligase</fullName>
        <ecNumber evidence="1">6.3.2.8</ecNumber>
    </recommendedName>
    <alternativeName>
        <fullName evidence="1">UDP-N-acetylmuramoyl-L-alanine synthetase</fullName>
    </alternativeName>
</protein>
<dbReference type="EC" id="6.3.2.8" evidence="1"/>
<dbReference type="EMBL" id="CP000440">
    <property type="protein sequence ID" value="ABI86023.1"/>
    <property type="molecule type" value="Genomic_DNA"/>
</dbReference>
<dbReference type="RefSeq" id="WP_011655893.1">
    <property type="nucleotide sequence ID" value="NC_008390.1"/>
</dbReference>
<dbReference type="SMR" id="Q0BIK0"/>
<dbReference type="GeneID" id="93084119"/>
<dbReference type="KEGG" id="bam:Bamb_0464"/>
<dbReference type="PATRIC" id="fig|339670.21.peg.1142"/>
<dbReference type="eggNOG" id="COG0773">
    <property type="taxonomic scope" value="Bacteria"/>
</dbReference>
<dbReference type="UniPathway" id="UPA00219"/>
<dbReference type="Proteomes" id="UP000000662">
    <property type="component" value="Chromosome 1"/>
</dbReference>
<dbReference type="GO" id="GO:0005737">
    <property type="term" value="C:cytoplasm"/>
    <property type="evidence" value="ECO:0007669"/>
    <property type="project" value="UniProtKB-SubCell"/>
</dbReference>
<dbReference type="GO" id="GO:0005524">
    <property type="term" value="F:ATP binding"/>
    <property type="evidence" value="ECO:0007669"/>
    <property type="project" value="UniProtKB-UniRule"/>
</dbReference>
<dbReference type="GO" id="GO:0008763">
    <property type="term" value="F:UDP-N-acetylmuramate-L-alanine ligase activity"/>
    <property type="evidence" value="ECO:0007669"/>
    <property type="project" value="UniProtKB-UniRule"/>
</dbReference>
<dbReference type="GO" id="GO:0051301">
    <property type="term" value="P:cell division"/>
    <property type="evidence" value="ECO:0007669"/>
    <property type="project" value="UniProtKB-KW"/>
</dbReference>
<dbReference type="GO" id="GO:0071555">
    <property type="term" value="P:cell wall organization"/>
    <property type="evidence" value="ECO:0007669"/>
    <property type="project" value="UniProtKB-KW"/>
</dbReference>
<dbReference type="GO" id="GO:0009252">
    <property type="term" value="P:peptidoglycan biosynthetic process"/>
    <property type="evidence" value="ECO:0007669"/>
    <property type="project" value="UniProtKB-UniRule"/>
</dbReference>
<dbReference type="GO" id="GO:0008360">
    <property type="term" value="P:regulation of cell shape"/>
    <property type="evidence" value="ECO:0007669"/>
    <property type="project" value="UniProtKB-KW"/>
</dbReference>
<dbReference type="FunFam" id="3.40.1190.10:FF:000001">
    <property type="entry name" value="UDP-N-acetylmuramate--L-alanine ligase"/>
    <property type="match status" value="1"/>
</dbReference>
<dbReference type="Gene3D" id="3.90.190.20">
    <property type="entry name" value="Mur ligase, C-terminal domain"/>
    <property type="match status" value="1"/>
</dbReference>
<dbReference type="Gene3D" id="3.40.1190.10">
    <property type="entry name" value="Mur-like, catalytic domain"/>
    <property type="match status" value="1"/>
</dbReference>
<dbReference type="Gene3D" id="3.40.50.720">
    <property type="entry name" value="NAD(P)-binding Rossmann-like Domain"/>
    <property type="match status" value="1"/>
</dbReference>
<dbReference type="HAMAP" id="MF_00046">
    <property type="entry name" value="MurC"/>
    <property type="match status" value="1"/>
</dbReference>
<dbReference type="InterPro" id="IPR036565">
    <property type="entry name" value="Mur-like_cat_sf"/>
</dbReference>
<dbReference type="InterPro" id="IPR004101">
    <property type="entry name" value="Mur_ligase_C"/>
</dbReference>
<dbReference type="InterPro" id="IPR036615">
    <property type="entry name" value="Mur_ligase_C_dom_sf"/>
</dbReference>
<dbReference type="InterPro" id="IPR013221">
    <property type="entry name" value="Mur_ligase_cen"/>
</dbReference>
<dbReference type="InterPro" id="IPR000713">
    <property type="entry name" value="Mur_ligase_N"/>
</dbReference>
<dbReference type="InterPro" id="IPR050061">
    <property type="entry name" value="MurCDEF_pg_biosynth"/>
</dbReference>
<dbReference type="InterPro" id="IPR005758">
    <property type="entry name" value="UDP-N-AcMur_Ala_ligase_MurC"/>
</dbReference>
<dbReference type="NCBIfam" id="TIGR01082">
    <property type="entry name" value="murC"/>
    <property type="match status" value="1"/>
</dbReference>
<dbReference type="PANTHER" id="PTHR43445:SF3">
    <property type="entry name" value="UDP-N-ACETYLMURAMATE--L-ALANINE LIGASE"/>
    <property type="match status" value="1"/>
</dbReference>
<dbReference type="PANTHER" id="PTHR43445">
    <property type="entry name" value="UDP-N-ACETYLMURAMATE--L-ALANINE LIGASE-RELATED"/>
    <property type="match status" value="1"/>
</dbReference>
<dbReference type="Pfam" id="PF01225">
    <property type="entry name" value="Mur_ligase"/>
    <property type="match status" value="1"/>
</dbReference>
<dbReference type="Pfam" id="PF02875">
    <property type="entry name" value="Mur_ligase_C"/>
    <property type="match status" value="1"/>
</dbReference>
<dbReference type="Pfam" id="PF08245">
    <property type="entry name" value="Mur_ligase_M"/>
    <property type="match status" value="1"/>
</dbReference>
<dbReference type="SUPFAM" id="SSF51984">
    <property type="entry name" value="MurCD N-terminal domain"/>
    <property type="match status" value="1"/>
</dbReference>
<dbReference type="SUPFAM" id="SSF53623">
    <property type="entry name" value="MurD-like peptide ligases, catalytic domain"/>
    <property type="match status" value="1"/>
</dbReference>
<dbReference type="SUPFAM" id="SSF53244">
    <property type="entry name" value="MurD-like peptide ligases, peptide-binding domain"/>
    <property type="match status" value="1"/>
</dbReference>
<evidence type="ECO:0000255" key="1">
    <source>
        <dbReference type="HAMAP-Rule" id="MF_00046"/>
    </source>
</evidence>
<accession>Q0BIK0</accession>
<comment type="function">
    <text evidence="1">Cell wall formation.</text>
</comment>
<comment type="catalytic activity">
    <reaction evidence="1">
        <text>UDP-N-acetyl-alpha-D-muramate + L-alanine + ATP = UDP-N-acetyl-alpha-D-muramoyl-L-alanine + ADP + phosphate + H(+)</text>
        <dbReference type="Rhea" id="RHEA:23372"/>
        <dbReference type="ChEBI" id="CHEBI:15378"/>
        <dbReference type="ChEBI" id="CHEBI:30616"/>
        <dbReference type="ChEBI" id="CHEBI:43474"/>
        <dbReference type="ChEBI" id="CHEBI:57972"/>
        <dbReference type="ChEBI" id="CHEBI:70757"/>
        <dbReference type="ChEBI" id="CHEBI:83898"/>
        <dbReference type="ChEBI" id="CHEBI:456216"/>
        <dbReference type="EC" id="6.3.2.8"/>
    </reaction>
</comment>
<comment type="pathway">
    <text evidence="1">Cell wall biogenesis; peptidoglycan biosynthesis.</text>
</comment>
<comment type="subcellular location">
    <subcellularLocation>
        <location evidence="1">Cytoplasm</location>
    </subcellularLocation>
</comment>
<comment type="similarity">
    <text evidence="1">Belongs to the MurCDEF family.</text>
</comment>
<name>MURC_BURCM</name>
<gene>
    <name evidence="1" type="primary">murC</name>
    <name type="ordered locus">Bamb_0464</name>
</gene>
<feature type="chain" id="PRO_1000004319" description="UDP-N-acetylmuramate--L-alanine ligase">
    <location>
        <begin position="1"/>
        <end position="465"/>
    </location>
</feature>
<feature type="binding site" evidence="1">
    <location>
        <begin position="112"/>
        <end position="118"/>
    </location>
    <ligand>
        <name>ATP</name>
        <dbReference type="ChEBI" id="CHEBI:30616"/>
    </ligand>
</feature>
<organism>
    <name type="scientific">Burkholderia ambifaria (strain ATCC BAA-244 / DSM 16087 / CCUG 44356 / LMG 19182 / AMMD)</name>
    <name type="common">Burkholderia cepacia (strain AMMD)</name>
    <dbReference type="NCBI Taxonomy" id="339670"/>
    <lineage>
        <taxon>Bacteria</taxon>
        <taxon>Pseudomonadati</taxon>
        <taxon>Pseudomonadota</taxon>
        <taxon>Betaproteobacteria</taxon>
        <taxon>Burkholderiales</taxon>
        <taxon>Burkholderiaceae</taxon>
        <taxon>Burkholderia</taxon>
        <taxon>Burkholderia cepacia complex</taxon>
    </lineage>
</organism>